<protein>
    <recommendedName>
        <fullName evidence="1">Nucleoid-associated protein YPDSF_2432</fullName>
    </recommendedName>
</protein>
<organism>
    <name type="scientific">Yersinia pestis (strain Pestoides F)</name>
    <dbReference type="NCBI Taxonomy" id="386656"/>
    <lineage>
        <taxon>Bacteria</taxon>
        <taxon>Pseudomonadati</taxon>
        <taxon>Pseudomonadota</taxon>
        <taxon>Gammaproteobacteria</taxon>
        <taxon>Enterobacterales</taxon>
        <taxon>Yersiniaceae</taxon>
        <taxon>Yersinia</taxon>
    </lineage>
</organism>
<proteinExistence type="inferred from homology"/>
<feature type="chain" id="PRO_1000045960" description="Nucleoid-associated protein YPDSF_2432">
    <location>
        <begin position="1"/>
        <end position="334"/>
    </location>
</feature>
<evidence type="ECO:0000255" key="1">
    <source>
        <dbReference type="HAMAP-Rule" id="MF_00730"/>
    </source>
</evidence>
<name>NDPA_YERPP</name>
<reference key="1">
    <citation type="submission" date="2007-02" db="EMBL/GenBank/DDBJ databases">
        <title>Complete sequence of chromosome of Yersinia pestis Pestoides F.</title>
        <authorList>
            <consortium name="US DOE Joint Genome Institute"/>
            <person name="Copeland A."/>
            <person name="Lucas S."/>
            <person name="Lapidus A."/>
            <person name="Barry K."/>
            <person name="Detter J.C."/>
            <person name="Glavina del Rio T."/>
            <person name="Hammon N."/>
            <person name="Israni S."/>
            <person name="Dalin E."/>
            <person name="Tice H."/>
            <person name="Pitluck S."/>
            <person name="Di Bartolo G."/>
            <person name="Chain P."/>
            <person name="Malfatti S."/>
            <person name="Shin M."/>
            <person name="Vergez L."/>
            <person name="Schmutz J."/>
            <person name="Larimer F."/>
            <person name="Land M."/>
            <person name="Hauser L."/>
            <person name="Worsham P."/>
            <person name="Chu M."/>
            <person name="Bearden S."/>
            <person name="Garcia E."/>
            <person name="Richardson P."/>
        </authorList>
    </citation>
    <scope>NUCLEOTIDE SEQUENCE [LARGE SCALE GENOMIC DNA]</scope>
    <source>
        <strain>Pestoides F</strain>
    </source>
</reference>
<accession>A4TNE5</accession>
<comment type="subcellular location">
    <subcellularLocation>
        <location evidence="1">Cytoplasm</location>
        <location evidence="1">Nucleoid</location>
    </subcellularLocation>
</comment>
<comment type="similarity">
    <text evidence="1">Belongs to the YejK family.</text>
</comment>
<keyword id="KW-0963">Cytoplasm</keyword>
<gene>
    <name type="ordered locus">YPDSF_2432</name>
</gene>
<dbReference type="EMBL" id="CP000668">
    <property type="protein sequence ID" value="ABP40807.1"/>
    <property type="molecule type" value="Genomic_DNA"/>
</dbReference>
<dbReference type="SMR" id="A4TNE5"/>
<dbReference type="KEGG" id="ypp:YPDSF_2432"/>
<dbReference type="PATRIC" id="fig|386656.14.peg.3944"/>
<dbReference type="GO" id="GO:0043590">
    <property type="term" value="C:bacterial nucleoid"/>
    <property type="evidence" value="ECO:0007669"/>
    <property type="project" value="TreeGrafter"/>
</dbReference>
<dbReference type="GO" id="GO:0005737">
    <property type="term" value="C:cytoplasm"/>
    <property type="evidence" value="ECO:0007669"/>
    <property type="project" value="UniProtKB-UniRule"/>
</dbReference>
<dbReference type="GO" id="GO:0003690">
    <property type="term" value="F:double-stranded DNA binding"/>
    <property type="evidence" value="ECO:0007669"/>
    <property type="project" value="TreeGrafter"/>
</dbReference>
<dbReference type="GO" id="GO:0003727">
    <property type="term" value="F:single-stranded RNA binding"/>
    <property type="evidence" value="ECO:0007669"/>
    <property type="project" value="TreeGrafter"/>
</dbReference>
<dbReference type="HAMAP" id="MF_00730">
    <property type="entry name" value="NdpA"/>
    <property type="match status" value="1"/>
</dbReference>
<dbReference type="InterPro" id="IPR007358">
    <property type="entry name" value="Nucleoid_associated_NdpA"/>
</dbReference>
<dbReference type="NCBIfam" id="NF001557">
    <property type="entry name" value="PRK00378.1"/>
    <property type="match status" value="1"/>
</dbReference>
<dbReference type="PANTHER" id="PTHR38772">
    <property type="match status" value="1"/>
</dbReference>
<dbReference type="PANTHER" id="PTHR38772:SF1">
    <property type="entry name" value="NUCLEOID-ASSOCIATED PROTEIN YEJK"/>
    <property type="match status" value="1"/>
</dbReference>
<dbReference type="Pfam" id="PF04245">
    <property type="entry name" value="NA37"/>
    <property type="match status" value="1"/>
</dbReference>
<sequence length="334" mass="37740">MSLDIDQIALHQLIKRDEQTLDVVLRDSLLPTNAVVEEMMAELHRVYSAKSKAYGLFNEQSELADALKRSRKGDEDFLSFSRAATGRLRDELAKYPFAEGGVVLFCQYRYLAVEYLLISVLSSCHSMRVNEQLDLSTTHYLDINRADIVARIDLTEWETNPESTRYLTFLKGRVGRKVSDFFMDFLSAAEGLDTKAQNRGLLQAVDDYCADAELGKNERQAYRQQVYSYCNEQLQAGEEIALQVLAQELPKLGEKDFQQFSAEQGYALEESFPADRGTLRQLTKFAGSGGGLSINFDALLLDERIFWDAATDTLTIKGTPPNLRDQLQRRAGSK</sequence>